<organism>
    <name type="scientific">Xenopus laevis</name>
    <name type="common">African clawed frog</name>
    <dbReference type="NCBI Taxonomy" id="8355"/>
    <lineage>
        <taxon>Eukaryota</taxon>
        <taxon>Metazoa</taxon>
        <taxon>Chordata</taxon>
        <taxon>Craniata</taxon>
        <taxon>Vertebrata</taxon>
        <taxon>Euteleostomi</taxon>
        <taxon>Amphibia</taxon>
        <taxon>Batrachia</taxon>
        <taxon>Anura</taxon>
        <taxon>Pipoidea</taxon>
        <taxon>Pipidae</taxon>
        <taxon>Xenopodinae</taxon>
        <taxon>Xenopus</taxon>
        <taxon>Xenopus</taxon>
    </lineage>
</organism>
<comment type="function">
    <text evidence="2">Potential effector of the planar cell polarity signaling pathway. Plays a role in targeted membrane trafficking most probably at the level of vesicle fusion with membranes. Involved in cilium biogenesis by regulating the transport of cargo proteins to the basal body and to the apical tips of cilia. More generally involved in exocytosis in secretory cells.</text>
</comment>
<comment type="subunit">
    <text evidence="2">Interacts with fuz.</text>
</comment>
<comment type="subcellular location">
    <subcellularLocation>
        <location evidence="2 3">Cytoplasm</location>
        <location evidence="2 3">Cytoskeleton</location>
        <location evidence="2 3">Cilium basal body</location>
    </subcellularLocation>
</comment>
<comment type="similarity">
    <text evidence="5">Belongs to the small GTPase superfamily. Rab family.</text>
</comment>
<keyword id="KW-0966">Cell projection</keyword>
<keyword id="KW-0969">Cilium</keyword>
<keyword id="KW-0970">Cilium biogenesis/degradation</keyword>
<keyword id="KW-0963">Cytoplasm</keyword>
<keyword id="KW-0206">Cytoskeleton</keyword>
<keyword id="KW-0268">Exocytosis</keyword>
<keyword id="KW-0342">GTP-binding</keyword>
<keyword id="KW-0547">Nucleotide-binding</keyword>
<keyword id="KW-0653">Protein transport</keyword>
<keyword id="KW-1185">Reference proteome</keyword>
<keyword id="KW-0813">Transport</keyword>
<feature type="chain" id="PRO_0000284541" description="Ciliogenesis and planar polarity effector 2">
    <location>
        <begin position="1"/>
        <end position="249"/>
    </location>
</feature>
<feature type="region of interest" description="Small GTPase-like">
    <location>
        <begin position="46"/>
        <end position="249"/>
    </location>
</feature>
<feature type="binding site" evidence="1">
    <location>
        <begin position="58"/>
        <end position="65"/>
    </location>
    <ligand>
        <name>GTP</name>
        <dbReference type="ChEBI" id="CHEBI:37565"/>
    </ligand>
</feature>
<feature type="binding site" evidence="1">
    <location>
        <begin position="171"/>
        <end position="174"/>
    </location>
    <ligand>
        <name>GTP</name>
        <dbReference type="ChEBI" id="CHEBI:37565"/>
    </ligand>
</feature>
<feature type="mutagenesis site" description="Loss of localization to the cilium basal body. Dominant negative form altering cilium biogenesis." evidence="2">
    <original>T</original>
    <variation>N</variation>
    <location>
        <position position="65"/>
    </location>
</feature>
<sequence length="249" mass="27867">MSVTPVLDPEWQRSPEGLDYLSRVLRHNKRKFFGLIERPVLPPHLPADVAAYKVFVCGKSGVGKTSFIAKLSGLAVPSMHHETAGIQTTCMYWPVRPSGSARPVIFRFQFWDCGEGALRKFDHILPACKEKADAVLFLFSFTDRSSFEDVPALISRTLDQDEDVTRVVIGTKLDQYMHTDVTEDDLRDFQRTWQLPVMRVRSVNGPRMTDGRDLDGRAGLAECAPVLNGLAEILWHRDQVIAGLVGGAE</sequence>
<evidence type="ECO:0000250" key="1"/>
<evidence type="ECO:0000269" key="2">
    <source>
    </source>
</evidence>
<evidence type="ECO:0000269" key="3">
    <source>
    </source>
</evidence>
<evidence type="ECO:0000303" key="4">
    <source>
    </source>
</evidence>
<evidence type="ECO:0000305" key="5"/>
<evidence type="ECO:0000312" key="6">
    <source>
        <dbReference type="Proteomes" id="UP000186698"/>
    </source>
</evidence>
<name>CPLN2_XENLA</name>
<gene>
    <name evidence="4" type="primary">cplane2</name>
    <name type="synonym">rsg1</name>
</gene>
<reference evidence="6" key="1">
    <citation type="journal article" date="2016" name="Nature">
        <title>Genome evolution in the allotetraploid frog Xenopus laevis.</title>
        <authorList>
            <person name="Session A.M."/>
            <person name="Uno Y."/>
            <person name="Kwon T."/>
            <person name="Chapman J.A."/>
            <person name="Toyoda A."/>
            <person name="Takahashi S."/>
            <person name="Fukui A."/>
            <person name="Hikosaka A."/>
            <person name="Suzuki A."/>
            <person name="Kondo M."/>
            <person name="van Heeringen S.J."/>
            <person name="Quigley I."/>
            <person name="Heinz S."/>
            <person name="Ogino H."/>
            <person name="Ochi H."/>
            <person name="Hellsten U."/>
            <person name="Lyons J.B."/>
            <person name="Simakov O."/>
            <person name="Putnam N."/>
            <person name="Stites J."/>
            <person name="Kuroki Y."/>
            <person name="Tanaka T."/>
            <person name="Michiue T."/>
            <person name="Watanabe M."/>
            <person name="Bogdanovic O."/>
            <person name="Lister R."/>
            <person name="Georgiou G."/>
            <person name="Paranjpe S.S."/>
            <person name="van Kruijsbergen I."/>
            <person name="Shu S."/>
            <person name="Carlson J."/>
            <person name="Kinoshita T."/>
            <person name="Ohta Y."/>
            <person name="Mawaribuchi S."/>
            <person name="Jenkins J."/>
            <person name="Grimwood J."/>
            <person name="Schmutz J."/>
            <person name="Mitros T."/>
            <person name="Mozaffari S.V."/>
            <person name="Suzuki Y."/>
            <person name="Haramoto Y."/>
            <person name="Yamamoto T.S."/>
            <person name="Takagi C."/>
            <person name="Heald R."/>
            <person name="Miller K."/>
            <person name="Haudenschild C."/>
            <person name="Kitzman J."/>
            <person name="Nakayama T."/>
            <person name="Izutsu Y."/>
            <person name="Robert J."/>
            <person name="Fortriede J."/>
            <person name="Burns K."/>
            <person name="Lotay V."/>
            <person name="Karimi K."/>
            <person name="Yasuoka Y."/>
            <person name="Dichmann D.S."/>
            <person name="Flajnik M.F."/>
            <person name="Houston D.W."/>
            <person name="Shendure J."/>
            <person name="DuPasquier L."/>
            <person name="Vize P.D."/>
            <person name="Zorn A.M."/>
            <person name="Ito M."/>
            <person name="Marcotte E.M."/>
            <person name="Wallingford J.B."/>
            <person name="Ito Y."/>
            <person name="Asashima M."/>
            <person name="Ueno N."/>
            <person name="Matsuda Y."/>
            <person name="Veenstra G.J."/>
            <person name="Fujiyama A."/>
            <person name="Harland R.M."/>
            <person name="Taira M."/>
            <person name="Rokhsar D.S."/>
        </authorList>
    </citation>
    <scope>NUCLEOTIDE SEQUENCE [LARGE SCALE GENOMIC DNA]</scope>
    <source>
        <strain evidence="6">J</strain>
    </source>
</reference>
<reference key="2">
    <citation type="submission" date="2004-06" db="EMBL/GenBank/DDBJ databases">
        <authorList>
            <consortium name="NIH - Xenopus Gene Collection (XGC) project"/>
        </authorList>
    </citation>
    <scope>NUCLEOTIDE SEQUENCE [LARGE SCALE MRNA]</scope>
    <source>
        <tissue>Embryo</tissue>
    </source>
</reference>
<reference key="3">
    <citation type="journal article" date="2009" name="Nat. Cell Biol.">
        <title>The planar cell polarity effector Fuz is essential for targeted membrane trafficking, ciliogenesis and mouse embryonic development.</title>
        <authorList>
            <person name="Gray R.S."/>
            <person name="Abitua P.B."/>
            <person name="Wlodarczyk B.J."/>
            <person name="Szabo-Rogers H.L."/>
            <person name="Blanchard O."/>
            <person name="Lee I."/>
            <person name="Weiss G.S."/>
            <person name="Liu K.J."/>
            <person name="Marcotte E.M."/>
            <person name="Wallingford J.B."/>
            <person name="Finnell R.H."/>
        </authorList>
    </citation>
    <scope>FUNCTION</scope>
    <scope>INTERACTION WITH FUZ</scope>
    <scope>MUTAGENESIS OF THR-65</scope>
    <scope>SUBCELLULAR LOCATION</scope>
</reference>
<reference key="4">
    <citation type="journal article" date="2016" name="Nat. Genet.">
        <title>The ciliopathy-associated CPLANE proteins direct basal body recruitment of intraflagellar transport machinery.</title>
        <authorList>
            <person name="Toriyama M."/>
            <person name="Lee C."/>
            <person name="Taylor S.P."/>
            <person name="Duran I."/>
            <person name="Cohn D.H."/>
            <person name="Bruel A.L."/>
            <person name="Tabler J.M."/>
            <person name="Drew K."/>
            <person name="Kelly M.R."/>
            <person name="Kim S."/>
            <person name="Park T.J."/>
            <person name="Braun D.A."/>
            <person name="Pierquin G."/>
            <person name="Biver A."/>
            <person name="Wagner K."/>
            <person name="Malfroot A."/>
            <person name="Panigrahi I."/>
            <person name="Franco B."/>
            <person name="Al-Lami H.A."/>
            <person name="Yeung Y."/>
            <person name="Choi Y.J."/>
            <person name="Duffourd Y."/>
            <person name="Faivre L."/>
            <person name="Riviere J.B."/>
            <person name="Chen J."/>
            <person name="Liu K.J."/>
            <person name="Marcotte E.M."/>
            <person name="Hildebrandt F."/>
            <person name="Thauvin-Robinet C."/>
            <person name="Krakow D."/>
            <person name="Jackson P.K."/>
            <person name="Wallingford J.B."/>
        </authorList>
    </citation>
    <scope>SUBCELLULAR LOCATION</scope>
</reference>
<proteinExistence type="evidence at protein level"/>
<protein>
    <recommendedName>
        <fullName evidence="5">Ciliogenesis and planar polarity effector 2</fullName>
    </recommendedName>
    <alternativeName>
        <fullName evidence="4">REM2- and Rab-like small GTPase 1</fullName>
    </alternativeName>
</protein>
<accession>Q6GNL4</accession>
<accession>A0A1L8ER78</accession>
<dbReference type="EMBL" id="CM004483">
    <property type="protein sequence ID" value="OCT61847.1"/>
    <property type="molecule type" value="Genomic_DNA"/>
</dbReference>
<dbReference type="EMBL" id="BC073493">
    <property type="protein sequence ID" value="AAH73493.1"/>
    <property type="molecule type" value="mRNA"/>
</dbReference>
<dbReference type="RefSeq" id="NP_001085897.1">
    <property type="nucleotide sequence ID" value="NM_001092428.1"/>
</dbReference>
<dbReference type="SMR" id="Q6GNL4"/>
<dbReference type="IntAct" id="Q6GNL4">
    <property type="interactions" value="1"/>
</dbReference>
<dbReference type="STRING" id="8355.A0A1L8ER78"/>
<dbReference type="PaxDb" id="8355-A0A1L8ER78"/>
<dbReference type="DNASU" id="444324"/>
<dbReference type="GeneID" id="444324"/>
<dbReference type="KEGG" id="xla:444324"/>
<dbReference type="CTD" id="444324"/>
<dbReference type="OMA" id="PSMHHET"/>
<dbReference type="OrthoDB" id="10266641at2759"/>
<dbReference type="Proteomes" id="UP000186698">
    <property type="component" value="Chromosome 9_10S"/>
</dbReference>
<dbReference type="Proteomes" id="UP000694892">
    <property type="component" value="Chromosome 9_10S"/>
</dbReference>
<dbReference type="Bgee" id="444324">
    <property type="expression patterns" value="Expressed in oocyte and 20 other cell types or tissues"/>
</dbReference>
<dbReference type="GO" id="GO:0036064">
    <property type="term" value="C:ciliary basal body"/>
    <property type="evidence" value="ECO:0000314"/>
    <property type="project" value="UniProtKB"/>
</dbReference>
<dbReference type="GO" id="GO:0005737">
    <property type="term" value="C:cytoplasm"/>
    <property type="evidence" value="ECO:0007669"/>
    <property type="project" value="UniProtKB-KW"/>
</dbReference>
<dbReference type="GO" id="GO:0005525">
    <property type="term" value="F:GTP binding"/>
    <property type="evidence" value="ECO:0007669"/>
    <property type="project" value="UniProtKB-KW"/>
</dbReference>
<dbReference type="GO" id="GO:0003924">
    <property type="term" value="F:GTPase activity"/>
    <property type="evidence" value="ECO:0007669"/>
    <property type="project" value="InterPro"/>
</dbReference>
<dbReference type="GO" id="GO:0060271">
    <property type="term" value="P:cilium assembly"/>
    <property type="evidence" value="ECO:0000315"/>
    <property type="project" value="UniProtKB"/>
</dbReference>
<dbReference type="GO" id="GO:0006887">
    <property type="term" value="P:exocytosis"/>
    <property type="evidence" value="ECO:0007669"/>
    <property type="project" value="UniProtKB-KW"/>
</dbReference>
<dbReference type="GO" id="GO:0001843">
    <property type="term" value="P:neural tube closure"/>
    <property type="evidence" value="ECO:0000315"/>
    <property type="project" value="UniProtKB"/>
</dbReference>
<dbReference type="GO" id="GO:0008104">
    <property type="term" value="P:protein localization"/>
    <property type="evidence" value="ECO:0000315"/>
    <property type="project" value="UniProtKB"/>
</dbReference>
<dbReference type="GO" id="GO:0015031">
    <property type="term" value="P:protein transport"/>
    <property type="evidence" value="ECO:0007669"/>
    <property type="project" value="UniProtKB-KW"/>
</dbReference>
<dbReference type="GO" id="GO:0017157">
    <property type="term" value="P:regulation of exocytosis"/>
    <property type="evidence" value="ECO:0000315"/>
    <property type="project" value="UniProtKB"/>
</dbReference>
<dbReference type="GO" id="GO:0031338">
    <property type="term" value="P:regulation of vesicle fusion"/>
    <property type="evidence" value="ECO:0000315"/>
    <property type="project" value="UniProtKB"/>
</dbReference>
<dbReference type="CDD" id="cd00882">
    <property type="entry name" value="Ras_like_GTPase"/>
    <property type="match status" value="1"/>
</dbReference>
<dbReference type="FunFam" id="3.40.50.300:FF:001043">
    <property type="entry name" value="ciliogenesis and planar polarity effector 2"/>
    <property type="match status" value="1"/>
</dbReference>
<dbReference type="Gene3D" id="3.40.50.300">
    <property type="entry name" value="P-loop containing nucleotide triphosphate hydrolases"/>
    <property type="match status" value="1"/>
</dbReference>
<dbReference type="InterPro" id="IPR027417">
    <property type="entry name" value="P-loop_NTPase"/>
</dbReference>
<dbReference type="InterPro" id="IPR039677">
    <property type="entry name" value="RSG1"/>
</dbReference>
<dbReference type="InterPro" id="IPR001806">
    <property type="entry name" value="Small_GTPase"/>
</dbReference>
<dbReference type="PANTHER" id="PTHR14983">
    <property type="entry name" value="CILIOGENESIS AND PLANAR POLARITY EFFECTOR 2"/>
    <property type="match status" value="1"/>
</dbReference>
<dbReference type="PANTHER" id="PTHR14983:SF1">
    <property type="entry name" value="CILIOGENESIS AND PLANAR POLARITY EFFECTOR 2"/>
    <property type="match status" value="1"/>
</dbReference>
<dbReference type="Pfam" id="PF00071">
    <property type="entry name" value="Ras"/>
    <property type="match status" value="1"/>
</dbReference>
<dbReference type="PRINTS" id="PR00449">
    <property type="entry name" value="RASTRNSFRMNG"/>
</dbReference>
<dbReference type="SUPFAM" id="SSF52540">
    <property type="entry name" value="P-loop containing nucleoside triphosphate hydrolases"/>
    <property type="match status" value="1"/>
</dbReference>